<evidence type="ECO:0000255" key="1">
    <source>
        <dbReference type="HAMAP-Rule" id="MF_01633"/>
    </source>
</evidence>
<reference key="1">
    <citation type="submission" date="2008-10" db="EMBL/GenBank/DDBJ databases">
        <title>Genome sequence of Bacillus cereus B4264.</title>
        <authorList>
            <person name="Dodson R.J."/>
            <person name="Durkin A.S."/>
            <person name="Rosovitz M.J."/>
            <person name="Rasko D.A."/>
            <person name="Hoffmaster A."/>
            <person name="Ravel J."/>
            <person name="Sutton G."/>
        </authorList>
    </citation>
    <scope>NUCLEOTIDE SEQUENCE [LARGE SCALE GENOMIC DNA]</scope>
    <source>
        <strain>B4264</strain>
    </source>
</reference>
<name>QUEC_BACC4</name>
<accession>B7HH96</accession>
<gene>
    <name evidence="1" type="primary">queC</name>
    <name type="ordered locus">BCB4264_A1394</name>
</gene>
<sequence length="220" mass="24539">MKKEKAVVVFSGGQDSTTCLFWAIEQFAEVEAVTFNYNQRHKLEIDCAAEIAKELGIKHTVLDMSLLNQLAPNALTRTDMEITHEEGELPSTFVDGRNLLFLSFAAVLAKQVGARHIVTGVCETDFSGYPDCRDVFVKSLNVTLNLSMDYPFVIHTPLMWINKAETWKLSDELGAFEFVREKTLTCYNGIIGDGCGECPACQLRKAGLDTYLQEREGANN</sequence>
<proteinExistence type="inferred from homology"/>
<keyword id="KW-0067">ATP-binding</keyword>
<keyword id="KW-0436">Ligase</keyword>
<keyword id="KW-0479">Metal-binding</keyword>
<keyword id="KW-0547">Nucleotide-binding</keyword>
<keyword id="KW-0671">Queuosine biosynthesis</keyword>
<keyword id="KW-0862">Zinc</keyword>
<comment type="function">
    <text evidence="1">Catalyzes the ATP-dependent conversion of 7-carboxy-7-deazaguanine (CDG) to 7-cyano-7-deazaguanine (preQ(0)).</text>
</comment>
<comment type="catalytic activity">
    <reaction evidence="1">
        <text>7-carboxy-7-deazaguanine + NH4(+) + ATP = 7-cyano-7-deazaguanine + ADP + phosphate + H2O + H(+)</text>
        <dbReference type="Rhea" id="RHEA:27982"/>
        <dbReference type="ChEBI" id="CHEBI:15377"/>
        <dbReference type="ChEBI" id="CHEBI:15378"/>
        <dbReference type="ChEBI" id="CHEBI:28938"/>
        <dbReference type="ChEBI" id="CHEBI:30616"/>
        <dbReference type="ChEBI" id="CHEBI:43474"/>
        <dbReference type="ChEBI" id="CHEBI:45075"/>
        <dbReference type="ChEBI" id="CHEBI:61036"/>
        <dbReference type="ChEBI" id="CHEBI:456216"/>
        <dbReference type="EC" id="6.3.4.20"/>
    </reaction>
</comment>
<comment type="cofactor">
    <cofactor evidence="1">
        <name>Zn(2+)</name>
        <dbReference type="ChEBI" id="CHEBI:29105"/>
    </cofactor>
    <text evidence="1">Binds 1 zinc ion per subunit.</text>
</comment>
<comment type="pathway">
    <text evidence="1">Purine metabolism; 7-cyano-7-deazaguanine biosynthesis.</text>
</comment>
<comment type="subunit">
    <text evidence="1">Homodimer.</text>
</comment>
<comment type="similarity">
    <text evidence="1">Belongs to the QueC family.</text>
</comment>
<organism>
    <name type="scientific">Bacillus cereus (strain B4264)</name>
    <dbReference type="NCBI Taxonomy" id="405532"/>
    <lineage>
        <taxon>Bacteria</taxon>
        <taxon>Bacillati</taxon>
        <taxon>Bacillota</taxon>
        <taxon>Bacilli</taxon>
        <taxon>Bacillales</taxon>
        <taxon>Bacillaceae</taxon>
        <taxon>Bacillus</taxon>
        <taxon>Bacillus cereus group</taxon>
    </lineage>
</organism>
<protein>
    <recommendedName>
        <fullName evidence="1">7-cyano-7-deazaguanine synthase</fullName>
        <ecNumber evidence="1">6.3.4.20</ecNumber>
    </recommendedName>
    <alternativeName>
        <fullName evidence="1">7-cyano-7-carbaguanine synthase</fullName>
    </alternativeName>
    <alternativeName>
        <fullName evidence="1">PreQ(0) synthase</fullName>
    </alternativeName>
    <alternativeName>
        <fullName evidence="1">Queuosine biosynthesis protein QueC</fullName>
    </alternativeName>
</protein>
<dbReference type="EC" id="6.3.4.20" evidence="1"/>
<dbReference type="EMBL" id="CP001176">
    <property type="protein sequence ID" value="ACK62543.1"/>
    <property type="molecule type" value="Genomic_DNA"/>
</dbReference>
<dbReference type="RefSeq" id="WP_000711597.1">
    <property type="nucleotide sequence ID" value="NC_011725.1"/>
</dbReference>
<dbReference type="SMR" id="B7HH96"/>
<dbReference type="KEGG" id="bcb:BCB4264_A1394"/>
<dbReference type="HOGENOM" id="CLU_081854_0_0_9"/>
<dbReference type="UniPathway" id="UPA00391"/>
<dbReference type="Proteomes" id="UP000007096">
    <property type="component" value="Chromosome"/>
</dbReference>
<dbReference type="GO" id="GO:0005524">
    <property type="term" value="F:ATP binding"/>
    <property type="evidence" value="ECO:0007669"/>
    <property type="project" value="UniProtKB-UniRule"/>
</dbReference>
<dbReference type="GO" id="GO:0016879">
    <property type="term" value="F:ligase activity, forming carbon-nitrogen bonds"/>
    <property type="evidence" value="ECO:0007669"/>
    <property type="project" value="UniProtKB-UniRule"/>
</dbReference>
<dbReference type="GO" id="GO:0008270">
    <property type="term" value="F:zinc ion binding"/>
    <property type="evidence" value="ECO:0007669"/>
    <property type="project" value="UniProtKB-UniRule"/>
</dbReference>
<dbReference type="GO" id="GO:0008616">
    <property type="term" value="P:queuosine biosynthetic process"/>
    <property type="evidence" value="ECO:0007669"/>
    <property type="project" value="UniProtKB-UniRule"/>
</dbReference>
<dbReference type="CDD" id="cd01995">
    <property type="entry name" value="QueC-like"/>
    <property type="match status" value="1"/>
</dbReference>
<dbReference type="FunFam" id="3.40.50.620:FF:000017">
    <property type="entry name" value="7-cyano-7-deazaguanine synthase"/>
    <property type="match status" value="1"/>
</dbReference>
<dbReference type="Gene3D" id="3.40.50.620">
    <property type="entry name" value="HUPs"/>
    <property type="match status" value="1"/>
</dbReference>
<dbReference type="HAMAP" id="MF_01633">
    <property type="entry name" value="QueC"/>
    <property type="match status" value="1"/>
</dbReference>
<dbReference type="InterPro" id="IPR018317">
    <property type="entry name" value="QueC"/>
</dbReference>
<dbReference type="InterPro" id="IPR014729">
    <property type="entry name" value="Rossmann-like_a/b/a_fold"/>
</dbReference>
<dbReference type="NCBIfam" id="TIGR00364">
    <property type="entry name" value="7-cyano-7-deazaguanine synthase QueC"/>
    <property type="match status" value="1"/>
</dbReference>
<dbReference type="PANTHER" id="PTHR42914">
    <property type="entry name" value="7-CYANO-7-DEAZAGUANINE SYNTHASE"/>
    <property type="match status" value="1"/>
</dbReference>
<dbReference type="PANTHER" id="PTHR42914:SF1">
    <property type="entry name" value="7-CYANO-7-DEAZAGUANINE SYNTHASE"/>
    <property type="match status" value="1"/>
</dbReference>
<dbReference type="Pfam" id="PF06508">
    <property type="entry name" value="QueC"/>
    <property type="match status" value="1"/>
</dbReference>
<dbReference type="PIRSF" id="PIRSF006293">
    <property type="entry name" value="ExsB"/>
    <property type="match status" value="1"/>
</dbReference>
<dbReference type="SUPFAM" id="SSF52402">
    <property type="entry name" value="Adenine nucleotide alpha hydrolases-like"/>
    <property type="match status" value="1"/>
</dbReference>
<feature type="chain" id="PRO_1000186558" description="7-cyano-7-deazaguanine synthase">
    <location>
        <begin position="1"/>
        <end position="220"/>
    </location>
</feature>
<feature type="binding site" evidence="1">
    <location>
        <begin position="10"/>
        <end position="20"/>
    </location>
    <ligand>
        <name>ATP</name>
        <dbReference type="ChEBI" id="CHEBI:30616"/>
    </ligand>
</feature>
<feature type="binding site" evidence="1">
    <location>
        <position position="186"/>
    </location>
    <ligand>
        <name>Zn(2+)</name>
        <dbReference type="ChEBI" id="CHEBI:29105"/>
    </ligand>
</feature>
<feature type="binding site" evidence="1">
    <location>
        <position position="195"/>
    </location>
    <ligand>
        <name>Zn(2+)</name>
        <dbReference type="ChEBI" id="CHEBI:29105"/>
    </ligand>
</feature>
<feature type="binding site" evidence="1">
    <location>
        <position position="198"/>
    </location>
    <ligand>
        <name>Zn(2+)</name>
        <dbReference type="ChEBI" id="CHEBI:29105"/>
    </ligand>
</feature>
<feature type="binding site" evidence="1">
    <location>
        <position position="201"/>
    </location>
    <ligand>
        <name>Zn(2+)</name>
        <dbReference type="ChEBI" id="CHEBI:29105"/>
    </ligand>
</feature>